<reference key="1">
    <citation type="journal article" date="2002" name="Proc. Natl. Acad. Sci. U.S.A.">
        <title>The genome sequence of Bifidobacterium longum reflects its adaptation to the human gastrointestinal tract.</title>
        <authorList>
            <person name="Schell M.A."/>
            <person name="Karmirantzou M."/>
            <person name="Snel B."/>
            <person name="Vilanova D."/>
            <person name="Berger B."/>
            <person name="Pessi G."/>
            <person name="Zwahlen M.-C."/>
            <person name="Desiere F."/>
            <person name="Bork P."/>
            <person name="Delley M."/>
            <person name="Pridmore R.D."/>
            <person name="Arigoni F."/>
        </authorList>
    </citation>
    <scope>NUCLEOTIDE SEQUENCE [LARGE SCALE GENOMIC DNA]</scope>
    <source>
        <strain>NCC 2705</strain>
    </source>
</reference>
<sequence length="218" mass="23570">MSEFNKDDYLNDLPDPSDAEAAAQASSGADASAESGSAQDSAAQAPSNEGADAAPAAAEGEKTGEGQSDSADTLTPLGKAKKEAADYLEALQRERAEFINYRNRTQKEQERFRQHGIIDVLTALLPALDDIDRIREHSEMDDSFKAVATKIDKAFEKFGVEKFGEKGEDFDPTKHDAILHKPDADAEKETVDTVVEAGYRIGDRVIRAARVVVASPQN</sequence>
<feature type="chain" id="PRO_0000113748" description="Protein GrpE">
    <location>
        <begin position="1"/>
        <end position="218"/>
    </location>
</feature>
<feature type="region of interest" description="Disordered" evidence="2">
    <location>
        <begin position="1"/>
        <end position="78"/>
    </location>
</feature>
<feature type="compositionally biased region" description="Low complexity" evidence="2">
    <location>
        <begin position="14"/>
        <end position="58"/>
    </location>
</feature>
<comment type="function">
    <text evidence="1">Participates actively in the response to hyperosmotic and heat shock by preventing the aggregation of stress-denatured proteins, in association with DnaK and GrpE. It is the nucleotide exchange factor for DnaK and may function as a thermosensor. Unfolded proteins bind initially to DnaJ; upon interaction with the DnaJ-bound protein, DnaK hydrolyzes its bound ATP, resulting in the formation of a stable complex. GrpE releases ADP from DnaK; ATP binding to DnaK triggers the release of the substrate protein, thus completing the reaction cycle. Several rounds of ATP-dependent interactions between DnaJ, DnaK and GrpE are required for fully efficient folding.</text>
</comment>
<comment type="subunit">
    <text evidence="1">Homodimer.</text>
</comment>
<comment type="subcellular location">
    <subcellularLocation>
        <location evidence="1">Cytoplasm</location>
    </subcellularLocation>
</comment>
<comment type="similarity">
    <text evidence="1">Belongs to the GrpE family.</text>
</comment>
<comment type="sequence caution" evidence="3">
    <conflict type="erroneous initiation">
        <sequence resource="EMBL-CDS" id="AAN24347"/>
    </conflict>
</comment>
<evidence type="ECO:0000255" key="1">
    <source>
        <dbReference type="HAMAP-Rule" id="MF_01151"/>
    </source>
</evidence>
<evidence type="ECO:0000256" key="2">
    <source>
        <dbReference type="SAM" id="MobiDB-lite"/>
    </source>
</evidence>
<evidence type="ECO:0000305" key="3"/>
<name>GRPE_BIFLO</name>
<accession>Q8G6W2</accession>
<proteinExistence type="inferred from homology"/>
<organism>
    <name type="scientific">Bifidobacterium longum (strain NCC 2705)</name>
    <dbReference type="NCBI Taxonomy" id="206672"/>
    <lineage>
        <taxon>Bacteria</taxon>
        <taxon>Bacillati</taxon>
        <taxon>Actinomycetota</taxon>
        <taxon>Actinomycetes</taxon>
        <taxon>Bifidobacteriales</taxon>
        <taxon>Bifidobacteriaceae</taxon>
        <taxon>Bifidobacterium</taxon>
    </lineage>
</organism>
<keyword id="KW-0143">Chaperone</keyword>
<keyword id="KW-0963">Cytoplasm</keyword>
<keyword id="KW-1185">Reference proteome</keyword>
<keyword id="KW-0346">Stress response</keyword>
<gene>
    <name evidence="1" type="primary">grpE</name>
    <name type="ordered locus">BL0519</name>
</gene>
<protein>
    <recommendedName>
        <fullName evidence="1">Protein GrpE</fullName>
    </recommendedName>
    <alternativeName>
        <fullName evidence="1">HSP-70 cofactor</fullName>
    </alternativeName>
</protein>
<dbReference type="EMBL" id="AE014295">
    <property type="protein sequence ID" value="AAN24347.1"/>
    <property type="status" value="ALT_INIT"/>
    <property type="molecule type" value="Genomic_DNA"/>
</dbReference>
<dbReference type="RefSeq" id="NP_695711.1">
    <property type="nucleotide sequence ID" value="NC_004307.2"/>
</dbReference>
<dbReference type="RefSeq" id="WP_007055523.1">
    <property type="nucleotide sequence ID" value="NC_004307.2"/>
</dbReference>
<dbReference type="SMR" id="Q8G6W2"/>
<dbReference type="STRING" id="206672.BL0519"/>
<dbReference type="EnsemblBacteria" id="AAN24347">
    <property type="protein sequence ID" value="AAN24347"/>
    <property type="gene ID" value="BL0519"/>
</dbReference>
<dbReference type="GeneID" id="69577367"/>
<dbReference type="KEGG" id="blo:BL0519"/>
<dbReference type="PATRIC" id="fig|206672.9.peg.1258"/>
<dbReference type="HOGENOM" id="CLU_057217_4_0_11"/>
<dbReference type="OrthoDB" id="5191115at2"/>
<dbReference type="Proteomes" id="UP000000439">
    <property type="component" value="Chromosome"/>
</dbReference>
<dbReference type="GO" id="GO:0005737">
    <property type="term" value="C:cytoplasm"/>
    <property type="evidence" value="ECO:0007669"/>
    <property type="project" value="UniProtKB-SubCell"/>
</dbReference>
<dbReference type="GO" id="GO:0000774">
    <property type="term" value="F:adenyl-nucleotide exchange factor activity"/>
    <property type="evidence" value="ECO:0007669"/>
    <property type="project" value="InterPro"/>
</dbReference>
<dbReference type="GO" id="GO:0042803">
    <property type="term" value="F:protein homodimerization activity"/>
    <property type="evidence" value="ECO:0007669"/>
    <property type="project" value="InterPro"/>
</dbReference>
<dbReference type="GO" id="GO:0051087">
    <property type="term" value="F:protein-folding chaperone binding"/>
    <property type="evidence" value="ECO:0007669"/>
    <property type="project" value="InterPro"/>
</dbReference>
<dbReference type="GO" id="GO:0051082">
    <property type="term" value="F:unfolded protein binding"/>
    <property type="evidence" value="ECO:0007669"/>
    <property type="project" value="TreeGrafter"/>
</dbReference>
<dbReference type="GO" id="GO:0006457">
    <property type="term" value="P:protein folding"/>
    <property type="evidence" value="ECO:0007669"/>
    <property type="project" value="InterPro"/>
</dbReference>
<dbReference type="CDD" id="cd00446">
    <property type="entry name" value="GrpE"/>
    <property type="match status" value="1"/>
</dbReference>
<dbReference type="FunFam" id="2.30.22.10:FF:000001">
    <property type="entry name" value="Protein GrpE"/>
    <property type="match status" value="1"/>
</dbReference>
<dbReference type="Gene3D" id="3.90.20.20">
    <property type="match status" value="1"/>
</dbReference>
<dbReference type="Gene3D" id="2.30.22.10">
    <property type="entry name" value="Head domain of nucleotide exchange factor GrpE"/>
    <property type="match status" value="1"/>
</dbReference>
<dbReference type="HAMAP" id="MF_01151">
    <property type="entry name" value="GrpE"/>
    <property type="match status" value="1"/>
</dbReference>
<dbReference type="InterPro" id="IPR000740">
    <property type="entry name" value="GrpE"/>
</dbReference>
<dbReference type="InterPro" id="IPR013805">
    <property type="entry name" value="GrpE_coiled_coil"/>
</dbReference>
<dbReference type="InterPro" id="IPR009012">
    <property type="entry name" value="GrpE_head"/>
</dbReference>
<dbReference type="NCBIfam" id="NF010754">
    <property type="entry name" value="PRK14157.1"/>
    <property type="match status" value="1"/>
</dbReference>
<dbReference type="PANTHER" id="PTHR21237">
    <property type="entry name" value="GRPE PROTEIN"/>
    <property type="match status" value="1"/>
</dbReference>
<dbReference type="PANTHER" id="PTHR21237:SF23">
    <property type="entry name" value="GRPE PROTEIN HOMOLOG, MITOCHONDRIAL"/>
    <property type="match status" value="1"/>
</dbReference>
<dbReference type="Pfam" id="PF01025">
    <property type="entry name" value="GrpE"/>
    <property type="match status" value="1"/>
</dbReference>
<dbReference type="PRINTS" id="PR00773">
    <property type="entry name" value="GRPEPROTEIN"/>
</dbReference>
<dbReference type="SUPFAM" id="SSF58014">
    <property type="entry name" value="Coiled-coil domain of nucleotide exchange factor GrpE"/>
    <property type="match status" value="1"/>
</dbReference>
<dbReference type="SUPFAM" id="SSF51064">
    <property type="entry name" value="Head domain of nucleotide exchange factor GrpE"/>
    <property type="match status" value="1"/>
</dbReference>
<dbReference type="PROSITE" id="PS01071">
    <property type="entry name" value="GRPE"/>
    <property type="match status" value="1"/>
</dbReference>